<keyword id="KW-0067">ATP-binding</keyword>
<keyword id="KW-0418">Kinase</keyword>
<keyword id="KW-0460">Magnesium</keyword>
<keyword id="KW-0479">Metal-binding</keyword>
<keyword id="KW-0547">Nucleotide-binding</keyword>
<keyword id="KW-1185">Reference proteome</keyword>
<keyword id="KW-0711">Selenium</keyword>
<keyword id="KW-0808">Transferase</keyword>
<gene>
    <name evidence="1" type="primary">selD</name>
    <name type="ordered locus">MXAN_2002</name>
</gene>
<organism>
    <name type="scientific">Myxococcus xanthus (strain DK1622)</name>
    <dbReference type="NCBI Taxonomy" id="246197"/>
    <lineage>
        <taxon>Bacteria</taxon>
        <taxon>Pseudomonadati</taxon>
        <taxon>Myxococcota</taxon>
        <taxon>Myxococcia</taxon>
        <taxon>Myxococcales</taxon>
        <taxon>Cystobacterineae</taxon>
        <taxon>Myxococcaceae</taxon>
        <taxon>Myxococcus</taxon>
    </lineage>
</organism>
<evidence type="ECO:0000255" key="1">
    <source>
        <dbReference type="HAMAP-Rule" id="MF_00625"/>
    </source>
</evidence>
<protein>
    <recommendedName>
        <fullName evidence="1">Selenide, water dikinase</fullName>
        <ecNumber evidence="1">2.7.9.3</ecNumber>
    </recommendedName>
    <alternativeName>
        <fullName evidence="1">Selenium donor protein</fullName>
    </alternativeName>
    <alternativeName>
        <fullName evidence="1">Selenophosphate synthase</fullName>
    </alternativeName>
</protein>
<feature type="chain" id="PRO_1000051598" description="Selenide, water dikinase">
    <location>
        <begin position="1"/>
        <end position="352"/>
    </location>
</feature>
<feature type="active site" evidence="1">
    <location>
        <position position="21"/>
    </location>
</feature>
<feature type="binding site" description="in other chain" evidence="1">
    <location>
        <position position="24"/>
    </location>
    <ligand>
        <name>ATP</name>
        <dbReference type="ChEBI" id="CHEBI:30616"/>
        <note>ligand shared between dimeric partners</note>
    </ligand>
</feature>
<feature type="binding site" description="in other chain" evidence="1">
    <location>
        <begin position="51"/>
        <end position="53"/>
    </location>
    <ligand>
        <name>ATP</name>
        <dbReference type="ChEBI" id="CHEBI:30616"/>
        <note>ligand shared between dimeric partners</note>
    </ligand>
</feature>
<feature type="binding site" evidence="1">
    <location>
        <position position="54"/>
    </location>
    <ligand>
        <name>Mg(2+)</name>
        <dbReference type="ChEBI" id="CHEBI:18420"/>
    </ligand>
</feature>
<feature type="binding site" description="in other chain" evidence="1">
    <location>
        <position position="71"/>
    </location>
    <ligand>
        <name>ATP</name>
        <dbReference type="ChEBI" id="CHEBI:30616"/>
        <note>ligand shared between dimeric partners</note>
    </ligand>
</feature>
<feature type="binding site" description="in other chain" evidence="1">
    <location>
        <position position="94"/>
    </location>
    <ligand>
        <name>ATP</name>
        <dbReference type="ChEBI" id="CHEBI:30616"/>
        <note>ligand shared between dimeric partners</note>
    </ligand>
</feature>
<feature type="binding site" evidence="1">
    <location>
        <position position="94"/>
    </location>
    <ligand>
        <name>Mg(2+)</name>
        <dbReference type="ChEBI" id="CHEBI:18420"/>
    </ligand>
</feature>
<feature type="binding site" evidence="1">
    <location>
        <begin position="141"/>
        <end position="143"/>
    </location>
    <ligand>
        <name>ATP</name>
        <dbReference type="ChEBI" id="CHEBI:30616"/>
        <note>ligand shared between dimeric partners</note>
    </ligand>
</feature>
<feature type="binding site" evidence="1">
    <location>
        <position position="231"/>
    </location>
    <ligand>
        <name>Mg(2+)</name>
        <dbReference type="ChEBI" id="CHEBI:18420"/>
    </ligand>
</feature>
<feature type="site" description="Important for catalytic activity" evidence="1">
    <location>
        <position position="24"/>
    </location>
</feature>
<accession>Q1DAT6</accession>
<sequence>MAEKKTDKVKRLTELSHCAGCAAKLRASDLAQVLGGLKSTKGPQALVGFSTNDDAAVYRLAPGMAVVETVDFFPPVVDDPFQFGAIAAANALSDIYAMGARPLFALNLVCFPDELPLKVLSKILAGGQSKADEAGIPILGGHSIRDPEPKFGMAVTGVVHPKKVLTNAGAKPGDVLFLTKPLGSGIATTAIKRGVASKQLAKRALGVMTTLNRAAGEVFASGKFKVNALTDVTGYGLLGHLLEMMTAAKARATLDLERIPLIAEVPALAEDGVVPGGTKSNLAHVHKKVRFPEGLPECIQWVLADAQTNGGLLASVPARQALKALKALEAAGVDAALIGEVQAGKPGIDVVG</sequence>
<name>SELD_MYXXD</name>
<reference key="1">
    <citation type="journal article" date="2006" name="Proc. Natl. Acad. Sci. U.S.A.">
        <title>Evolution of sensory complexity recorded in a myxobacterial genome.</title>
        <authorList>
            <person name="Goldman B.S."/>
            <person name="Nierman W.C."/>
            <person name="Kaiser D."/>
            <person name="Slater S.C."/>
            <person name="Durkin A.S."/>
            <person name="Eisen J.A."/>
            <person name="Ronning C.M."/>
            <person name="Barbazuk W.B."/>
            <person name="Blanchard M."/>
            <person name="Field C."/>
            <person name="Halling C."/>
            <person name="Hinkle G."/>
            <person name="Iartchuk O."/>
            <person name="Kim H.S."/>
            <person name="Mackenzie C."/>
            <person name="Madupu R."/>
            <person name="Miller N."/>
            <person name="Shvartsbeyn A."/>
            <person name="Sullivan S.A."/>
            <person name="Vaudin M."/>
            <person name="Wiegand R."/>
            <person name="Kaplan H.B."/>
        </authorList>
    </citation>
    <scope>NUCLEOTIDE SEQUENCE [LARGE SCALE GENOMIC DNA]</scope>
    <source>
        <strain>DK1622</strain>
    </source>
</reference>
<dbReference type="EC" id="2.7.9.3" evidence="1"/>
<dbReference type="EMBL" id="CP000113">
    <property type="protein sequence ID" value="ABF87090.1"/>
    <property type="molecule type" value="Genomic_DNA"/>
</dbReference>
<dbReference type="RefSeq" id="WP_011552092.1">
    <property type="nucleotide sequence ID" value="NC_008095.1"/>
</dbReference>
<dbReference type="SMR" id="Q1DAT6"/>
<dbReference type="STRING" id="246197.MXAN_2002"/>
<dbReference type="EnsemblBacteria" id="ABF87090">
    <property type="protein sequence ID" value="ABF87090"/>
    <property type="gene ID" value="MXAN_2002"/>
</dbReference>
<dbReference type="GeneID" id="41359412"/>
<dbReference type="KEGG" id="mxa:MXAN_2002"/>
<dbReference type="eggNOG" id="COG0709">
    <property type="taxonomic scope" value="Bacteria"/>
</dbReference>
<dbReference type="HOGENOM" id="CLU_032859_0_1_7"/>
<dbReference type="OrthoDB" id="9767928at2"/>
<dbReference type="Proteomes" id="UP000002402">
    <property type="component" value="Chromosome"/>
</dbReference>
<dbReference type="GO" id="GO:0005737">
    <property type="term" value="C:cytoplasm"/>
    <property type="evidence" value="ECO:0007669"/>
    <property type="project" value="TreeGrafter"/>
</dbReference>
<dbReference type="GO" id="GO:0005524">
    <property type="term" value="F:ATP binding"/>
    <property type="evidence" value="ECO:0007669"/>
    <property type="project" value="UniProtKB-UniRule"/>
</dbReference>
<dbReference type="GO" id="GO:0000287">
    <property type="term" value="F:magnesium ion binding"/>
    <property type="evidence" value="ECO:0007669"/>
    <property type="project" value="UniProtKB-UniRule"/>
</dbReference>
<dbReference type="GO" id="GO:0004756">
    <property type="term" value="F:selenide, water dikinase activity"/>
    <property type="evidence" value="ECO:0007669"/>
    <property type="project" value="UniProtKB-UniRule"/>
</dbReference>
<dbReference type="GO" id="GO:0016260">
    <property type="term" value="P:selenocysteine biosynthetic process"/>
    <property type="evidence" value="ECO:0007669"/>
    <property type="project" value="InterPro"/>
</dbReference>
<dbReference type="CDD" id="cd02195">
    <property type="entry name" value="SelD"/>
    <property type="match status" value="1"/>
</dbReference>
<dbReference type="FunFam" id="3.30.1330.10:FF:000003">
    <property type="entry name" value="Selenide, water dikinase"/>
    <property type="match status" value="1"/>
</dbReference>
<dbReference type="Gene3D" id="3.90.650.10">
    <property type="entry name" value="PurM-like C-terminal domain"/>
    <property type="match status" value="1"/>
</dbReference>
<dbReference type="Gene3D" id="3.30.1330.10">
    <property type="entry name" value="PurM-like, N-terminal domain"/>
    <property type="match status" value="1"/>
</dbReference>
<dbReference type="HAMAP" id="MF_00625">
    <property type="entry name" value="SelD"/>
    <property type="match status" value="1"/>
</dbReference>
<dbReference type="InterPro" id="IPR010918">
    <property type="entry name" value="PurM-like_C_dom"/>
</dbReference>
<dbReference type="InterPro" id="IPR036676">
    <property type="entry name" value="PurM-like_C_sf"/>
</dbReference>
<dbReference type="InterPro" id="IPR016188">
    <property type="entry name" value="PurM-like_N"/>
</dbReference>
<dbReference type="InterPro" id="IPR036921">
    <property type="entry name" value="PurM-like_N_sf"/>
</dbReference>
<dbReference type="InterPro" id="IPR023061">
    <property type="entry name" value="SelD_I"/>
</dbReference>
<dbReference type="InterPro" id="IPR004536">
    <property type="entry name" value="SPS/SelD"/>
</dbReference>
<dbReference type="NCBIfam" id="NF002098">
    <property type="entry name" value="PRK00943.1"/>
    <property type="match status" value="1"/>
</dbReference>
<dbReference type="NCBIfam" id="TIGR00476">
    <property type="entry name" value="selD"/>
    <property type="match status" value="1"/>
</dbReference>
<dbReference type="PANTHER" id="PTHR10256:SF0">
    <property type="entry name" value="INACTIVE SELENIDE, WATER DIKINASE-LIKE PROTEIN-RELATED"/>
    <property type="match status" value="1"/>
</dbReference>
<dbReference type="PANTHER" id="PTHR10256">
    <property type="entry name" value="SELENIDE, WATER DIKINASE"/>
    <property type="match status" value="1"/>
</dbReference>
<dbReference type="Pfam" id="PF00586">
    <property type="entry name" value="AIRS"/>
    <property type="match status" value="1"/>
</dbReference>
<dbReference type="Pfam" id="PF02769">
    <property type="entry name" value="AIRS_C"/>
    <property type="match status" value="1"/>
</dbReference>
<dbReference type="PIRSF" id="PIRSF036407">
    <property type="entry name" value="Selenphspht_syn"/>
    <property type="match status" value="1"/>
</dbReference>
<dbReference type="SUPFAM" id="SSF56042">
    <property type="entry name" value="PurM C-terminal domain-like"/>
    <property type="match status" value="1"/>
</dbReference>
<dbReference type="SUPFAM" id="SSF55326">
    <property type="entry name" value="PurM N-terminal domain-like"/>
    <property type="match status" value="1"/>
</dbReference>
<comment type="function">
    <text evidence="1">Synthesizes selenophosphate from selenide and ATP.</text>
</comment>
<comment type="catalytic activity">
    <reaction evidence="1">
        <text>hydrogenselenide + ATP + H2O = selenophosphate + AMP + phosphate + 2 H(+)</text>
        <dbReference type="Rhea" id="RHEA:18737"/>
        <dbReference type="ChEBI" id="CHEBI:15377"/>
        <dbReference type="ChEBI" id="CHEBI:15378"/>
        <dbReference type="ChEBI" id="CHEBI:16144"/>
        <dbReference type="ChEBI" id="CHEBI:29317"/>
        <dbReference type="ChEBI" id="CHEBI:30616"/>
        <dbReference type="ChEBI" id="CHEBI:43474"/>
        <dbReference type="ChEBI" id="CHEBI:456215"/>
        <dbReference type="EC" id="2.7.9.3"/>
    </reaction>
</comment>
<comment type="cofactor">
    <cofactor evidence="1">
        <name>Mg(2+)</name>
        <dbReference type="ChEBI" id="CHEBI:18420"/>
    </cofactor>
    <text evidence="1">Binds 1 Mg(2+) ion per monomer.</text>
</comment>
<comment type="subunit">
    <text evidence="1">Homodimer.</text>
</comment>
<comment type="similarity">
    <text evidence="1">Belongs to the selenophosphate synthase 1 family. Class I subfamily.</text>
</comment>
<proteinExistence type="inferred from homology"/>